<dbReference type="EC" id="2.7.11.33" evidence="1"/>
<dbReference type="EC" id="2.7.4.28" evidence="1"/>
<dbReference type="EMBL" id="AE008922">
    <property type="protein sequence ID" value="AAM41445.1"/>
    <property type="molecule type" value="Genomic_DNA"/>
</dbReference>
<dbReference type="RefSeq" id="NP_637521.1">
    <property type="nucleotide sequence ID" value="NC_003902.1"/>
</dbReference>
<dbReference type="RefSeq" id="WP_011037311.1">
    <property type="nucleotide sequence ID" value="NC_003902.1"/>
</dbReference>
<dbReference type="SMR" id="Q8P8S4"/>
<dbReference type="STRING" id="190485.XCC2165"/>
<dbReference type="EnsemblBacteria" id="AAM41445">
    <property type="protein sequence ID" value="AAM41445"/>
    <property type="gene ID" value="XCC2165"/>
</dbReference>
<dbReference type="KEGG" id="xcc:XCC2165"/>
<dbReference type="PATRIC" id="fig|190485.4.peg.2312"/>
<dbReference type="eggNOG" id="COG1806">
    <property type="taxonomic scope" value="Bacteria"/>
</dbReference>
<dbReference type="HOGENOM" id="CLU_046206_1_0_6"/>
<dbReference type="OrthoDB" id="9782201at2"/>
<dbReference type="Proteomes" id="UP000001010">
    <property type="component" value="Chromosome"/>
</dbReference>
<dbReference type="GO" id="GO:0043531">
    <property type="term" value="F:ADP binding"/>
    <property type="evidence" value="ECO:0007669"/>
    <property type="project" value="UniProtKB-UniRule"/>
</dbReference>
<dbReference type="GO" id="GO:0005524">
    <property type="term" value="F:ATP binding"/>
    <property type="evidence" value="ECO:0007669"/>
    <property type="project" value="InterPro"/>
</dbReference>
<dbReference type="GO" id="GO:0016776">
    <property type="term" value="F:phosphotransferase activity, phosphate group as acceptor"/>
    <property type="evidence" value="ECO:0007669"/>
    <property type="project" value="UniProtKB-UniRule"/>
</dbReference>
<dbReference type="GO" id="GO:0004674">
    <property type="term" value="F:protein serine/threonine kinase activity"/>
    <property type="evidence" value="ECO:0007669"/>
    <property type="project" value="UniProtKB-UniRule"/>
</dbReference>
<dbReference type="HAMAP" id="MF_01062">
    <property type="entry name" value="PSRP"/>
    <property type="match status" value="1"/>
</dbReference>
<dbReference type="InterPro" id="IPR005177">
    <property type="entry name" value="Kinase-pyrophosphorylase"/>
</dbReference>
<dbReference type="InterPro" id="IPR026530">
    <property type="entry name" value="PSRP"/>
</dbReference>
<dbReference type="NCBIfam" id="NF003742">
    <property type="entry name" value="PRK05339.1"/>
    <property type="match status" value="1"/>
</dbReference>
<dbReference type="PANTHER" id="PTHR31756">
    <property type="entry name" value="PYRUVATE, PHOSPHATE DIKINASE REGULATORY PROTEIN 1, CHLOROPLASTIC"/>
    <property type="match status" value="1"/>
</dbReference>
<dbReference type="PANTHER" id="PTHR31756:SF3">
    <property type="entry name" value="PYRUVATE, PHOSPHATE DIKINASE REGULATORY PROTEIN 1, CHLOROPLASTIC"/>
    <property type="match status" value="1"/>
</dbReference>
<dbReference type="Pfam" id="PF03618">
    <property type="entry name" value="Kinase-PPPase"/>
    <property type="match status" value="1"/>
</dbReference>
<feature type="chain" id="PRO_0000196743" description="Putative phosphoenolpyruvate synthase regulatory protein">
    <location>
        <begin position="1"/>
        <end position="273"/>
    </location>
</feature>
<feature type="binding site" evidence="1">
    <location>
        <begin position="153"/>
        <end position="160"/>
    </location>
    <ligand>
        <name>ADP</name>
        <dbReference type="ChEBI" id="CHEBI:456216"/>
    </ligand>
</feature>
<organism>
    <name type="scientific">Xanthomonas campestris pv. campestris (strain ATCC 33913 / DSM 3586 / NCPPB 528 / LMG 568 / P 25)</name>
    <dbReference type="NCBI Taxonomy" id="190485"/>
    <lineage>
        <taxon>Bacteria</taxon>
        <taxon>Pseudomonadati</taxon>
        <taxon>Pseudomonadota</taxon>
        <taxon>Gammaproteobacteria</taxon>
        <taxon>Lysobacterales</taxon>
        <taxon>Lysobacteraceae</taxon>
        <taxon>Xanthomonas</taxon>
    </lineage>
</organism>
<name>PSRP_XANCP</name>
<keyword id="KW-0418">Kinase</keyword>
<keyword id="KW-0547">Nucleotide-binding</keyword>
<keyword id="KW-1185">Reference proteome</keyword>
<keyword id="KW-0723">Serine/threonine-protein kinase</keyword>
<keyword id="KW-0808">Transferase</keyword>
<reference key="1">
    <citation type="journal article" date="2002" name="Nature">
        <title>Comparison of the genomes of two Xanthomonas pathogens with differing host specificities.</title>
        <authorList>
            <person name="da Silva A.C.R."/>
            <person name="Ferro J.A."/>
            <person name="Reinach F.C."/>
            <person name="Farah C.S."/>
            <person name="Furlan L.R."/>
            <person name="Quaggio R.B."/>
            <person name="Monteiro-Vitorello C.B."/>
            <person name="Van Sluys M.A."/>
            <person name="Almeida N.F. Jr."/>
            <person name="Alves L.M.C."/>
            <person name="do Amaral A.M."/>
            <person name="Bertolini M.C."/>
            <person name="Camargo L.E.A."/>
            <person name="Camarotte G."/>
            <person name="Cannavan F."/>
            <person name="Cardozo J."/>
            <person name="Chambergo F."/>
            <person name="Ciapina L.P."/>
            <person name="Cicarelli R.M.B."/>
            <person name="Coutinho L.L."/>
            <person name="Cursino-Santos J.R."/>
            <person name="El-Dorry H."/>
            <person name="Faria J.B."/>
            <person name="Ferreira A.J.S."/>
            <person name="Ferreira R.C.C."/>
            <person name="Ferro M.I.T."/>
            <person name="Formighieri E.F."/>
            <person name="Franco M.C."/>
            <person name="Greggio C.C."/>
            <person name="Gruber A."/>
            <person name="Katsuyama A.M."/>
            <person name="Kishi L.T."/>
            <person name="Leite R.P."/>
            <person name="Lemos E.G.M."/>
            <person name="Lemos M.V.F."/>
            <person name="Locali E.C."/>
            <person name="Machado M.A."/>
            <person name="Madeira A.M.B.N."/>
            <person name="Martinez-Rossi N.M."/>
            <person name="Martins E.C."/>
            <person name="Meidanis J."/>
            <person name="Menck C.F.M."/>
            <person name="Miyaki C.Y."/>
            <person name="Moon D.H."/>
            <person name="Moreira L.M."/>
            <person name="Novo M.T.M."/>
            <person name="Okura V.K."/>
            <person name="Oliveira M.C."/>
            <person name="Oliveira V.R."/>
            <person name="Pereira H.A."/>
            <person name="Rossi A."/>
            <person name="Sena J.A.D."/>
            <person name="Silva C."/>
            <person name="de Souza R.F."/>
            <person name="Spinola L.A.F."/>
            <person name="Takita M.A."/>
            <person name="Tamura R.E."/>
            <person name="Teixeira E.C."/>
            <person name="Tezza R.I.D."/>
            <person name="Trindade dos Santos M."/>
            <person name="Truffi D."/>
            <person name="Tsai S.M."/>
            <person name="White F.F."/>
            <person name="Setubal J.C."/>
            <person name="Kitajima J.P."/>
        </authorList>
    </citation>
    <scope>NUCLEOTIDE SEQUENCE [LARGE SCALE GENOMIC DNA]</scope>
    <source>
        <strain>ATCC 33913 / DSM 3586 / NCPPB 528 / LMG 568 / P 25</strain>
    </source>
</reference>
<comment type="function">
    <text evidence="1">Bifunctional serine/threonine kinase and phosphorylase involved in the regulation of the phosphoenolpyruvate synthase (PEPS) by catalyzing its phosphorylation/dephosphorylation.</text>
</comment>
<comment type="catalytic activity">
    <reaction evidence="1">
        <text>[pyruvate, water dikinase] + ADP = [pyruvate, water dikinase]-phosphate + AMP + H(+)</text>
        <dbReference type="Rhea" id="RHEA:46020"/>
        <dbReference type="Rhea" id="RHEA-COMP:11425"/>
        <dbReference type="Rhea" id="RHEA-COMP:11426"/>
        <dbReference type="ChEBI" id="CHEBI:15378"/>
        <dbReference type="ChEBI" id="CHEBI:43176"/>
        <dbReference type="ChEBI" id="CHEBI:68546"/>
        <dbReference type="ChEBI" id="CHEBI:456215"/>
        <dbReference type="ChEBI" id="CHEBI:456216"/>
        <dbReference type="EC" id="2.7.11.33"/>
    </reaction>
</comment>
<comment type="catalytic activity">
    <reaction evidence="1">
        <text>[pyruvate, water dikinase]-phosphate + phosphate + H(+) = [pyruvate, water dikinase] + diphosphate</text>
        <dbReference type="Rhea" id="RHEA:48580"/>
        <dbReference type="Rhea" id="RHEA-COMP:11425"/>
        <dbReference type="Rhea" id="RHEA-COMP:11426"/>
        <dbReference type="ChEBI" id="CHEBI:15378"/>
        <dbReference type="ChEBI" id="CHEBI:33019"/>
        <dbReference type="ChEBI" id="CHEBI:43176"/>
        <dbReference type="ChEBI" id="CHEBI:43474"/>
        <dbReference type="ChEBI" id="CHEBI:68546"/>
        <dbReference type="EC" id="2.7.4.28"/>
    </reaction>
</comment>
<comment type="similarity">
    <text evidence="1">Belongs to the pyruvate, phosphate/water dikinase regulatory protein family. PSRP subfamily.</text>
</comment>
<accession>Q8P8S4</accession>
<sequence length="273" mass="30825">MSTIRPVFYVSDGTGITAETIGHSLLTQFSGFNFVTDRMSFIDDADKARDAALRARAAGERYQVRPVVVNSCVDPQLSMILAESGALMLDVFAPFIEPLERELNAPRHSRVGRAHGMVDFETYHRRINAMNFALSHDDGIALNYDEADVILVAVSRAGKTPTCIYLALHYGIRAANYPLTEEDLESERLPPRLRNYRSKLFGLTIDPERLQQIRQERRANSRYSAAETCRREVATAERMFQMERIPTLSTTNTSIEEISSKVLSTLGLQREMF</sequence>
<evidence type="ECO:0000255" key="1">
    <source>
        <dbReference type="HAMAP-Rule" id="MF_01062"/>
    </source>
</evidence>
<protein>
    <recommendedName>
        <fullName evidence="1">Putative phosphoenolpyruvate synthase regulatory protein</fullName>
        <shortName evidence="1">PEP synthase regulatory protein</shortName>
        <shortName evidence="1">PSRP</shortName>
        <ecNumber evidence="1">2.7.11.33</ecNumber>
        <ecNumber evidence="1">2.7.4.28</ecNumber>
    </recommendedName>
    <alternativeName>
        <fullName evidence="1">Pyruvate, water dikinase regulatory protein</fullName>
    </alternativeName>
</protein>
<gene>
    <name type="ordered locus">XCC2165</name>
</gene>
<proteinExistence type="inferred from homology"/>